<gene>
    <name evidence="4" type="primary">Acad8</name>
</gene>
<protein>
    <recommendedName>
        <fullName>Isobutyryl-CoA dehydrogenase, mitochondrial</fullName>
        <ecNumber evidence="1">1.3.8.5</ecNumber>
    </recommendedName>
    <alternativeName>
        <fullName evidence="1">Acyl-CoA dehydrogenase family member 8</fullName>
        <shortName evidence="1">ACAD-8</shortName>
    </alternativeName>
</protein>
<proteinExistence type="evidence at protein level"/>
<keyword id="KW-0007">Acetylation</keyword>
<keyword id="KW-0101">Branched-chain amino acid catabolism</keyword>
<keyword id="KW-0274">FAD</keyword>
<keyword id="KW-0285">Flavoprotein</keyword>
<keyword id="KW-0496">Mitochondrion</keyword>
<keyword id="KW-0560">Oxidoreductase</keyword>
<keyword id="KW-1185">Reference proteome</keyword>
<keyword id="KW-0809">Transit peptide</keyword>
<accession>Q9D7B6</accession>
<accession>Q8BK36</accession>
<accession>Q8BKQ8</accession>
<accession>Q8CFY9</accession>
<accession>Q9D2L8</accession>
<evidence type="ECO:0000250" key="1">
    <source>
        <dbReference type="UniProtKB" id="Q9UKU7"/>
    </source>
</evidence>
<evidence type="ECO:0000255" key="2"/>
<evidence type="ECO:0000305" key="3"/>
<evidence type="ECO:0000312" key="4">
    <source>
        <dbReference type="MGI" id="MGI:1914198"/>
    </source>
</evidence>
<evidence type="ECO:0007744" key="5">
    <source>
    </source>
</evidence>
<evidence type="ECO:0007744" key="6">
    <source>
    </source>
</evidence>
<dbReference type="EC" id="1.3.8.5" evidence="1"/>
<dbReference type="EMBL" id="AK009379">
    <property type="protein sequence ID" value="BAB26255.2"/>
    <property type="molecule type" value="mRNA"/>
</dbReference>
<dbReference type="EMBL" id="AK019502">
    <property type="protein sequence ID" value="BAB31764.1"/>
    <property type="molecule type" value="mRNA"/>
</dbReference>
<dbReference type="EMBL" id="AK029897">
    <property type="protein sequence ID" value="BAC26664.1"/>
    <property type="status" value="ALT_INIT"/>
    <property type="molecule type" value="mRNA"/>
</dbReference>
<dbReference type="EMBL" id="AK051091">
    <property type="protein sequence ID" value="BAC34521.1"/>
    <property type="molecule type" value="mRNA"/>
</dbReference>
<dbReference type="EMBL" id="AK077335">
    <property type="protein sequence ID" value="BAC36757.1"/>
    <property type="molecule type" value="mRNA"/>
</dbReference>
<dbReference type="EMBL" id="BC037644">
    <property type="protein sequence ID" value="AAH37644.1"/>
    <property type="molecule type" value="mRNA"/>
</dbReference>
<dbReference type="CCDS" id="CCDS40567.1"/>
<dbReference type="RefSeq" id="NP_080138.2">
    <property type="nucleotide sequence ID" value="NM_025862.2"/>
</dbReference>
<dbReference type="SMR" id="Q9D7B6"/>
<dbReference type="BioGRID" id="211829">
    <property type="interactions" value="3"/>
</dbReference>
<dbReference type="FunCoup" id="Q9D7B6">
    <property type="interactions" value="1286"/>
</dbReference>
<dbReference type="STRING" id="10090.ENSMUSP00000054370"/>
<dbReference type="GlyGen" id="Q9D7B6">
    <property type="glycosylation" value="1 site, 1 O-linked glycan (1 site)"/>
</dbReference>
<dbReference type="iPTMnet" id="Q9D7B6"/>
<dbReference type="PhosphoSitePlus" id="Q9D7B6"/>
<dbReference type="SwissPalm" id="Q9D7B6"/>
<dbReference type="jPOST" id="Q9D7B6"/>
<dbReference type="PaxDb" id="10090-ENSMUSP00000112908"/>
<dbReference type="PeptideAtlas" id="Q9D7B6"/>
<dbReference type="ProteomicsDB" id="285631"/>
<dbReference type="Pumba" id="Q9D7B6"/>
<dbReference type="DNASU" id="66948"/>
<dbReference type="GeneID" id="66948"/>
<dbReference type="KEGG" id="mmu:66948"/>
<dbReference type="UCSC" id="uc009opy.2">
    <property type="organism name" value="mouse"/>
</dbReference>
<dbReference type="AGR" id="MGI:1914198"/>
<dbReference type="CTD" id="27034"/>
<dbReference type="MGI" id="MGI:1914198">
    <property type="gene designation" value="Acad8"/>
</dbReference>
<dbReference type="eggNOG" id="KOG0140">
    <property type="taxonomic scope" value="Eukaryota"/>
</dbReference>
<dbReference type="InParanoid" id="Q9D7B6"/>
<dbReference type="OrthoDB" id="10254877at2759"/>
<dbReference type="Reactome" id="R-MMU-70895">
    <property type="pathway name" value="Branched-chain amino acid catabolism"/>
</dbReference>
<dbReference type="Reactome" id="R-MMU-9837999">
    <property type="pathway name" value="Mitochondrial protein degradation"/>
</dbReference>
<dbReference type="UniPathway" id="UPA00362"/>
<dbReference type="BioGRID-ORCS" id="66948">
    <property type="hits" value="2 hits in 80 CRISPR screens"/>
</dbReference>
<dbReference type="CD-CODE" id="CE726F99">
    <property type="entry name" value="Postsynaptic density"/>
</dbReference>
<dbReference type="ChiTaRS" id="Acad8">
    <property type="organism name" value="mouse"/>
</dbReference>
<dbReference type="PRO" id="PR:Q9D7B6"/>
<dbReference type="Proteomes" id="UP000000589">
    <property type="component" value="Unplaced"/>
</dbReference>
<dbReference type="RNAct" id="Q9D7B6">
    <property type="molecule type" value="protein"/>
</dbReference>
<dbReference type="GO" id="GO:0005739">
    <property type="term" value="C:mitochondrion"/>
    <property type="evidence" value="ECO:0007005"/>
    <property type="project" value="MGI"/>
</dbReference>
<dbReference type="GO" id="GO:0050660">
    <property type="term" value="F:flavin adenine dinucleotide binding"/>
    <property type="evidence" value="ECO:0007669"/>
    <property type="project" value="InterPro"/>
</dbReference>
<dbReference type="GO" id="GO:0003853">
    <property type="term" value="F:short-chain 2-methyl fatty acyl-CoA dehydrogenase activity"/>
    <property type="evidence" value="ECO:0007669"/>
    <property type="project" value="RHEA"/>
</dbReference>
<dbReference type="GO" id="GO:0006629">
    <property type="term" value="P:lipid metabolic process"/>
    <property type="evidence" value="ECO:0007669"/>
    <property type="project" value="InterPro"/>
</dbReference>
<dbReference type="GO" id="GO:0006574">
    <property type="term" value="P:valine catabolic process"/>
    <property type="evidence" value="ECO:0007669"/>
    <property type="project" value="UniProtKB-UniPathway"/>
</dbReference>
<dbReference type="CDD" id="cd01162">
    <property type="entry name" value="IBD"/>
    <property type="match status" value="1"/>
</dbReference>
<dbReference type="FunFam" id="1.20.140.10:FF:000001">
    <property type="entry name" value="Acyl-CoA dehydrogenase"/>
    <property type="match status" value="1"/>
</dbReference>
<dbReference type="FunFam" id="1.10.540.10:FF:000020">
    <property type="entry name" value="Acyl-CoA dehydrogenase family member 8"/>
    <property type="match status" value="1"/>
</dbReference>
<dbReference type="FunFam" id="2.40.110.10:FF:000001">
    <property type="entry name" value="Acyl-CoA dehydrogenase, mitochondrial"/>
    <property type="match status" value="1"/>
</dbReference>
<dbReference type="Gene3D" id="1.10.540.10">
    <property type="entry name" value="Acyl-CoA dehydrogenase/oxidase, N-terminal domain"/>
    <property type="match status" value="1"/>
</dbReference>
<dbReference type="Gene3D" id="2.40.110.10">
    <property type="entry name" value="Butyryl-CoA Dehydrogenase, subunit A, domain 2"/>
    <property type="match status" value="1"/>
</dbReference>
<dbReference type="Gene3D" id="1.20.140.10">
    <property type="entry name" value="Butyryl-CoA Dehydrogenase, subunit A, domain 3"/>
    <property type="match status" value="1"/>
</dbReference>
<dbReference type="InterPro" id="IPR006089">
    <property type="entry name" value="Acyl-CoA_DH_CS"/>
</dbReference>
<dbReference type="InterPro" id="IPR006091">
    <property type="entry name" value="Acyl-CoA_Oxase/DH_mid-dom"/>
</dbReference>
<dbReference type="InterPro" id="IPR046373">
    <property type="entry name" value="Acyl-CoA_Oxase/DH_mid-dom_sf"/>
</dbReference>
<dbReference type="InterPro" id="IPR036250">
    <property type="entry name" value="AcylCo_DH-like_C"/>
</dbReference>
<dbReference type="InterPro" id="IPR009075">
    <property type="entry name" value="AcylCo_DH/oxidase_C"/>
</dbReference>
<dbReference type="InterPro" id="IPR013786">
    <property type="entry name" value="AcylCoA_DH/ox_N"/>
</dbReference>
<dbReference type="InterPro" id="IPR037069">
    <property type="entry name" value="AcylCoA_DH/ox_N_sf"/>
</dbReference>
<dbReference type="InterPro" id="IPR009100">
    <property type="entry name" value="AcylCoA_DH/oxidase_NM_dom_sf"/>
</dbReference>
<dbReference type="InterPro" id="IPR034178">
    <property type="entry name" value="IBD"/>
</dbReference>
<dbReference type="InterPro" id="IPR052547">
    <property type="entry name" value="Mito_Isobutyryl-CoADH"/>
</dbReference>
<dbReference type="PANTHER" id="PTHR43831">
    <property type="entry name" value="ISOBUTYRYL-COA DEHYDROGENASE"/>
    <property type="match status" value="1"/>
</dbReference>
<dbReference type="PANTHER" id="PTHR43831:SF1">
    <property type="entry name" value="ISOBUTYRYL-COA DEHYDROGENASE, MITOCHONDRIAL"/>
    <property type="match status" value="1"/>
</dbReference>
<dbReference type="Pfam" id="PF00441">
    <property type="entry name" value="Acyl-CoA_dh_1"/>
    <property type="match status" value="1"/>
</dbReference>
<dbReference type="Pfam" id="PF02770">
    <property type="entry name" value="Acyl-CoA_dh_M"/>
    <property type="match status" value="1"/>
</dbReference>
<dbReference type="Pfam" id="PF02771">
    <property type="entry name" value="Acyl-CoA_dh_N"/>
    <property type="match status" value="1"/>
</dbReference>
<dbReference type="PIRSF" id="PIRSF016578">
    <property type="entry name" value="HsaA"/>
    <property type="match status" value="1"/>
</dbReference>
<dbReference type="SUPFAM" id="SSF47203">
    <property type="entry name" value="Acyl-CoA dehydrogenase C-terminal domain-like"/>
    <property type="match status" value="1"/>
</dbReference>
<dbReference type="SUPFAM" id="SSF56645">
    <property type="entry name" value="Acyl-CoA dehydrogenase NM domain-like"/>
    <property type="match status" value="1"/>
</dbReference>
<dbReference type="PROSITE" id="PS00072">
    <property type="entry name" value="ACYL_COA_DH_1"/>
    <property type="match status" value="1"/>
</dbReference>
<organism>
    <name type="scientific">Mus musculus</name>
    <name type="common">Mouse</name>
    <dbReference type="NCBI Taxonomy" id="10090"/>
    <lineage>
        <taxon>Eukaryota</taxon>
        <taxon>Metazoa</taxon>
        <taxon>Chordata</taxon>
        <taxon>Craniata</taxon>
        <taxon>Vertebrata</taxon>
        <taxon>Euteleostomi</taxon>
        <taxon>Mammalia</taxon>
        <taxon>Eutheria</taxon>
        <taxon>Euarchontoglires</taxon>
        <taxon>Glires</taxon>
        <taxon>Rodentia</taxon>
        <taxon>Myomorpha</taxon>
        <taxon>Muroidea</taxon>
        <taxon>Muridae</taxon>
        <taxon>Murinae</taxon>
        <taxon>Mus</taxon>
        <taxon>Mus</taxon>
    </lineage>
</organism>
<feature type="transit peptide" description="Mitochondrion" evidence="2">
    <location>
        <begin position="1"/>
        <end position="20"/>
    </location>
</feature>
<feature type="chain" id="PRO_0000000523" description="Isobutyryl-CoA dehydrogenase, mitochondrial">
    <location>
        <begin position="21"/>
        <end position="413"/>
    </location>
</feature>
<feature type="active site" description="Proton acceptor" evidence="1">
    <location>
        <position position="396"/>
    </location>
</feature>
<feature type="binding site" description="in other chain" evidence="1">
    <location>
        <begin position="156"/>
        <end position="165"/>
    </location>
    <ligand>
        <name>FAD</name>
        <dbReference type="ChEBI" id="CHEBI:57692"/>
        <note>ligand shared between dimeric partners</note>
    </ligand>
</feature>
<feature type="binding site" evidence="1">
    <location>
        <position position="165"/>
    </location>
    <ligand>
        <name>substrate</name>
    </ligand>
</feature>
<feature type="binding site" description="in other chain" evidence="1">
    <location>
        <begin position="189"/>
        <end position="191"/>
    </location>
    <ligand>
        <name>FAD</name>
        <dbReference type="ChEBI" id="CHEBI:57692"/>
        <note>ligand shared between dimeric partners</note>
    </ligand>
</feature>
<feature type="binding site" evidence="1">
    <location>
        <begin position="272"/>
        <end position="275"/>
    </location>
    <ligand>
        <name>substrate</name>
    </ligand>
</feature>
<feature type="binding site" evidence="1">
    <location>
        <position position="300"/>
    </location>
    <ligand>
        <name>FAD</name>
        <dbReference type="ChEBI" id="CHEBI:57692"/>
        <note>ligand shared between dimeric partners</note>
    </ligand>
</feature>
<feature type="binding site" evidence="1">
    <location>
        <begin position="310"/>
        <end position="311"/>
    </location>
    <ligand>
        <name>FAD</name>
        <dbReference type="ChEBI" id="CHEBI:57692"/>
        <note>ligand shared between dimeric partners</note>
    </ligand>
</feature>
<feature type="binding site" evidence="1">
    <location>
        <begin position="369"/>
        <end position="373"/>
    </location>
    <ligand>
        <name>FAD</name>
        <dbReference type="ChEBI" id="CHEBI:57692"/>
        <note>ligand shared between dimeric partners</note>
    </ligand>
</feature>
<feature type="binding site" description="in other chain" evidence="1">
    <location>
        <begin position="398"/>
        <end position="400"/>
    </location>
    <ligand>
        <name>FAD</name>
        <dbReference type="ChEBI" id="CHEBI:57692"/>
        <note>ligand shared between dimeric partners</note>
    </ligand>
</feature>
<feature type="binding site" evidence="1">
    <location>
        <position position="408"/>
    </location>
    <ligand>
        <name>substrate</name>
    </ligand>
</feature>
<feature type="modified residue" description="N6-acetyllysine; alternate" evidence="5">
    <location>
        <position position="48"/>
    </location>
</feature>
<feature type="modified residue" description="N6-succinyllysine; alternate" evidence="6">
    <location>
        <position position="48"/>
    </location>
</feature>
<feature type="modified residue" description="N6-succinyllysine" evidence="6">
    <location>
        <position position="211"/>
    </location>
</feature>
<feature type="modified residue" description="N6-acetyllysine" evidence="5">
    <location>
        <position position="229"/>
    </location>
</feature>
<feature type="modified residue" description="N6-succinyllysine" evidence="6">
    <location>
        <position position="269"/>
    </location>
</feature>
<feature type="sequence conflict" description="In Ref. 1; BAB26255/BAB31764/BAC26664/BAC34521/BAC36757." evidence="3" ref="1">
    <original>G</original>
    <variation>E</variation>
    <location>
        <position position="207"/>
    </location>
</feature>
<feature type="sequence conflict" description="In Ref. 1; BAC34521." evidence="3" ref="1">
    <original>A</original>
    <variation>P</variation>
    <location>
        <position position="254"/>
    </location>
</feature>
<feature type="sequence conflict" description="In Ref. 1; BAB31764." evidence="3" ref="1">
    <original>D</original>
    <variation>RLAPKLESLAWSLCAAGISLDAPMGCSVQVNHEVDQRAELF</variation>
    <location>
        <position position="413"/>
    </location>
</feature>
<reference key="1">
    <citation type="journal article" date="2005" name="Science">
        <title>The transcriptional landscape of the mammalian genome.</title>
        <authorList>
            <person name="Carninci P."/>
            <person name="Kasukawa T."/>
            <person name="Katayama S."/>
            <person name="Gough J."/>
            <person name="Frith M.C."/>
            <person name="Maeda N."/>
            <person name="Oyama R."/>
            <person name="Ravasi T."/>
            <person name="Lenhard B."/>
            <person name="Wells C."/>
            <person name="Kodzius R."/>
            <person name="Shimokawa K."/>
            <person name="Bajic V.B."/>
            <person name="Brenner S.E."/>
            <person name="Batalov S."/>
            <person name="Forrest A.R."/>
            <person name="Zavolan M."/>
            <person name="Davis M.J."/>
            <person name="Wilming L.G."/>
            <person name="Aidinis V."/>
            <person name="Allen J.E."/>
            <person name="Ambesi-Impiombato A."/>
            <person name="Apweiler R."/>
            <person name="Aturaliya R.N."/>
            <person name="Bailey T.L."/>
            <person name="Bansal M."/>
            <person name="Baxter L."/>
            <person name="Beisel K.W."/>
            <person name="Bersano T."/>
            <person name="Bono H."/>
            <person name="Chalk A.M."/>
            <person name="Chiu K.P."/>
            <person name="Choudhary V."/>
            <person name="Christoffels A."/>
            <person name="Clutterbuck D.R."/>
            <person name="Crowe M.L."/>
            <person name="Dalla E."/>
            <person name="Dalrymple B.P."/>
            <person name="de Bono B."/>
            <person name="Della Gatta G."/>
            <person name="di Bernardo D."/>
            <person name="Down T."/>
            <person name="Engstrom P."/>
            <person name="Fagiolini M."/>
            <person name="Faulkner G."/>
            <person name="Fletcher C.F."/>
            <person name="Fukushima T."/>
            <person name="Furuno M."/>
            <person name="Futaki S."/>
            <person name="Gariboldi M."/>
            <person name="Georgii-Hemming P."/>
            <person name="Gingeras T.R."/>
            <person name="Gojobori T."/>
            <person name="Green R.E."/>
            <person name="Gustincich S."/>
            <person name="Harbers M."/>
            <person name="Hayashi Y."/>
            <person name="Hensch T.K."/>
            <person name="Hirokawa N."/>
            <person name="Hill D."/>
            <person name="Huminiecki L."/>
            <person name="Iacono M."/>
            <person name="Ikeo K."/>
            <person name="Iwama A."/>
            <person name="Ishikawa T."/>
            <person name="Jakt M."/>
            <person name="Kanapin A."/>
            <person name="Katoh M."/>
            <person name="Kawasawa Y."/>
            <person name="Kelso J."/>
            <person name="Kitamura H."/>
            <person name="Kitano H."/>
            <person name="Kollias G."/>
            <person name="Krishnan S.P."/>
            <person name="Kruger A."/>
            <person name="Kummerfeld S.K."/>
            <person name="Kurochkin I.V."/>
            <person name="Lareau L.F."/>
            <person name="Lazarevic D."/>
            <person name="Lipovich L."/>
            <person name="Liu J."/>
            <person name="Liuni S."/>
            <person name="McWilliam S."/>
            <person name="Madan Babu M."/>
            <person name="Madera M."/>
            <person name="Marchionni L."/>
            <person name="Matsuda H."/>
            <person name="Matsuzawa S."/>
            <person name="Miki H."/>
            <person name="Mignone F."/>
            <person name="Miyake S."/>
            <person name="Morris K."/>
            <person name="Mottagui-Tabar S."/>
            <person name="Mulder N."/>
            <person name="Nakano N."/>
            <person name="Nakauchi H."/>
            <person name="Ng P."/>
            <person name="Nilsson R."/>
            <person name="Nishiguchi S."/>
            <person name="Nishikawa S."/>
            <person name="Nori F."/>
            <person name="Ohara O."/>
            <person name="Okazaki Y."/>
            <person name="Orlando V."/>
            <person name="Pang K.C."/>
            <person name="Pavan W.J."/>
            <person name="Pavesi G."/>
            <person name="Pesole G."/>
            <person name="Petrovsky N."/>
            <person name="Piazza S."/>
            <person name="Reed J."/>
            <person name="Reid J.F."/>
            <person name="Ring B.Z."/>
            <person name="Ringwald M."/>
            <person name="Rost B."/>
            <person name="Ruan Y."/>
            <person name="Salzberg S.L."/>
            <person name="Sandelin A."/>
            <person name="Schneider C."/>
            <person name="Schoenbach C."/>
            <person name="Sekiguchi K."/>
            <person name="Semple C.A."/>
            <person name="Seno S."/>
            <person name="Sessa L."/>
            <person name="Sheng Y."/>
            <person name="Shibata Y."/>
            <person name="Shimada H."/>
            <person name="Shimada K."/>
            <person name="Silva D."/>
            <person name="Sinclair B."/>
            <person name="Sperling S."/>
            <person name="Stupka E."/>
            <person name="Sugiura K."/>
            <person name="Sultana R."/>
            <person name="Takenaka Y."/>
            <person name="Taki K."/>
            <person name="Tammoja K."/>
            <person name="Tan S.L."/>
            <person name="Tang S."/>
            <person name="Taylor M.S."/>
            <person name="Tegner J."/>
            <person name="Teichmann S.A."/>
            <person name="Ueda H.R."/>
            <person name="van Nimwegen E."/>
            <person name="Verardo R."/>
            <person name="Wei C.L."/>
            <person name="Yagi K."/>
            <person name="Yamanishi H."/>
            <person name="Zabarovsky E."/>
            <person name="Zhu S."/>
            <person name="Zimmer A."/>
            <person name="Hide W."/>
            <person name="Bult C."/>
            <person name="Grimmond S.M."/>
            <person name="Teasdale R.D."/>
            <person name="Liu E.T."/>
            <person name="Brusic V."/>
            <person name="Quackenbush J."/>
            <person name="Wahlestedt C."/>
            <person name="Mattick J.S."/>
            <person name="Hume D.A."/>
            <person name="Kai C."/>
            <person name="Sasaki D."/>
            <person name="Tomaru Y."/>
            <person name="Fukuda S."/>
            <person name="Kanamori-Katayama M."/>
            <person name="Suzuki M."/>
            <person name="Aoki J."/>
            <person name="Arakawa T."/>
            <person name="Iida J."/>
            <person name="Imamura K."/>
            <person name="Itoh M."/>
            <person name="Kato T."/>
            <person name="Kawaji H."/>
            <person name="Kawagashira N."/>
            <person name="Kawashima T."/>
            <person name="Kojima M."/>
            <person name="Kondo S."/>
            <person name="Konno H."/>
            <person name="Nakano K."/>
            <person name="Ninomiya N."/>
            <person name="Nishio T."/>
            <person name="Okada M."/>
            <person name="Plessy C."/>
            <person name="Shibata K."/>
            <person name="Shiraki T."/>
            <person name="Suzuki S."/>
            <person name="Tagami M."/>
            <person name="Waki K."/>
            <person name="Watahiki A."/>
            <person name="Okamura-Oho Y."/>
            <person name="Suzuki H."/>
            <person name="Kawai J."/>
            <person name="Hayashizaki Y."/>
        </authorList>
    </citation>
    <scope>NUCLEOTIDE SEQUENCE [LARGE SCALE MRNA]</scope>
    <source>
        <strain>C57BL/6J</strain>
        <tissue>Embryo</tissue>
        <tissue>Pituitary</tissue>
        <tissue>Skin</tissue>
        <tissue>Testis</tissue>
        <tissue>Tongue</tissue>
    </source>
</reference>
<reference key="2">
    <citation type="journal article" date="2004" name="Genome Res.">
        <title>The status, quality, and expansion of the NIH full-length cDNA project: the Mammalian Gene Collection (MGC).</title>
        <authorList>
            <consortium name="The MGC Project Team"/>
        </authorList>
    </citation>
    <scope>NUCLEOTIDE SEQUENCE [LARGE SCALE MRNA]</scope>
    <source>
        <strain>FVB/N</strain>
        <tissue>Liver</tissue>
    </source>
</reference>
<reference key="3">
    <citation type="journal article" date="2010" name="Cell">
        <title>A tissue-specific atlas of mouse protein phosphorylation and expression.</title>
        <authorList>
            <person name="Huttlin E.L."/>
            <person name="Jedrychowski M.P."/>
            <person name="Elias J.E."/>
            <person name="Goswami T."/>
            <person name="Rad R."/>
            <person name="Beausoleil S.A."/>
            <person name="Villen J."/>
            <person name="Haas W."/>
            <person name="Sowa M.E."/>
            <person name="Gygi S.P."/>
        </authorList>
    </citation>
    <scope>IDENTIFICATION BY MASS SPECTROMETRY [LARGE SCALE ANALYSIS]</scope>
    <source>
        <tissue>Brain</tissue>
        <tissue>Brown adipose tissue</tissue>
        <tissue>Heart</tissue>
        <tissue>Kidney</tissue>
        <tissue>Liver</tissue>
        <tissue>Lung</tissue>
        <tissue>Pancreas</tissue>
        <tissue>Spleen</tissue>
        <tissue>Testis</tissue>
    </source>
</reference>
<reference key="4">
    <citation type="journal article" date="2013" name="Mol. Cell">
        <title>SIRT5-mediated lysine desuccinylation impacts diverse metabolic pathways.</title>
        <authorList>
            <person name="Park J."/>
            <person name="Chen Y."/>
            <person name="Tishkoff D.X."/>
            <person name="Peng C."/>
            <person name="Tan M."/>
            <person name="Dai L."/>
            <person name="Xie Z."/>
            <person name="Zhang Y."/>
            <person name="Zwaans B.M."/>
            <person name="Skinner M.E."/>
            <person name="Lombard D.B."/>
            <person name="Zhao Y."/>
        </authorList>
    </citation>
    <scope>SUCCINYLATION [LARGE SCALE ANALYSIS] AT LYS-48; LYS-211 AND LYS-269</scope>
    <scope>IDENTIFICATION BY MASS SPECTROMETRY [LARGE SCALE ANALYSIS]</scope>
    <source>
        <tissue>Liver</tissue>
    </source>
</reference>
<reference key="5">
    <citation type="journal article" date="2013" name="Proc. Natl. Acad. Sci. U.S.A.">
        <title>Label-free quantitative proteomics of the lysine acetylome in mitochondria identifies substrates of SIRT3 in metabolic pathways.</title>
        <authorList>
            <person name="Rardin M.J."/>
            <person name="Newman J.C."/>
            <person name="Held J.M."/>
            <person name="Cusack M.P."/>
            <person name="Sorensen D.J."/>
            <person name="Li B."/>
            <person name="Schilling B."/>
            <person name="Mooney S.D."/>
            <person name="Kahn C.R."/>
            <person name="Verdin E."/>
            <person name="Gibson B.W."/>
        </authorList>
    </citation>
    <scope>ACETYLATION [LARGE SCALE ANALYSIS] AT LYS-48 AND LYS-229</scope>
    <scope>IDENTIFICATION BY MASS SPECTROMETRY [LARGE SCALE ANALYSIS]</scope>
    <source>
        <tissue>Liver</tissue>
    </source>
</reference>
<name>ACAD8_MOUSE</name>
<comment type="function">
    <text evidence="1">Isobutyryl-CoA dehydrogenase which catalyzes the conversion of 2-methylpropanoyl-CoA to (2E)-2-methylpropenoyl-CoA in the valine catabolic pathway. To a lesser extent, also able to catalyze the oxidation of (2S)-2-methylbutanoyl-CoA.</text>
</comment>
<comment type="catalytic activity">
    <reaction evidence="1">
        <text>2-methylpropanoyl-CoA + oxidized [electron-transfer flavoprotein] + H(+) = 2-methylpropenoyl-CoA + reduced [electron-transfer flavoprotein]</text>
        <dbReference type="Rhea" id="RHEA:44180"/>
        <dbReference type="Rhea" id="RHEA-COMP:10685"/>
        <dbReference type="Rhea" id="RHEA-COMP:10686"/>
        <dbReference type="ChEBI" id="CHEBI:15378"/>
        <dbReference type="ChEBI" id="CHEBI:57338"/>
        <dbReference type="ChEBI" id="CHEBI:57692"/>
        <dbReference type="ChEBI" id="CHEBI:58307"/>
        <dbReference type="ChEBI" id="CHEBI:62500"/>
        <dbReference type="EC" id="1.3.8.5"/>
    </reaction>
    <physiologicalReaction direction="left-to-right" evidence="1">
        <dbReference type="Rhea" id="RHEA:44181"/>
    </physiologicalReaction>
</comment>
<comment type="catalytic activity">
    <reaction evidence="1">
        <text>(2S)-2-methylbutanoyl-CoA + oxidized [electron-transfer flavoprotein] + H(+) = (2E)-2-methylbut-2-enoyl-CoA + reduced [electron-transfer flavoprotein]</text>
        <dbReference type="Rhea" id="RHEA:48256"/>
        <dbReference type="Rhea" id="RHEA-COMP:10685"/>
        <dbReference type="Rhea" id="RHEA-COMP:10686"/>
        <dbReference type="ChEBI" id="CHEBI:15378"/>
        <dbReference type="ChEBI" id="CHEBI:57337"/>
        <dbReference type="ChEBI" id="CHEBI:57692"/>
        <dbReference type="ChEBI" id="CHEBI:58307"/>
        <dbReference type="ChEBI" id="CHEBI:88166"/>
    </reaction>
    <physiologicalReaction direction="left-to-right" evidence="1">
        <dbReference type="Rhea" id="RHEA:48257"/>
    </physiologicalReaction>
</comment>
<comment type="catalytic activity">
    <reaction evidence="1">
        <text>propanoyl-CoA + oxidized [electron-transfer flavoprotein] + H(+) = acryloyl-CoA + reduced [electron-transfer flavoprotein]</text>
        <dbReference type="Rhea" id="RHEA:31287"/>
        <dbReference type="Rhea" id="RHEA-COMP:10685"/>
        <dbReference type="Rhea" id="RHEA-COMP:10686"/>
        <dbReference type="ChEBI" id="CHEBI:15378"/>
        <dbReference type="ChEBI" id="CHEBI:57367"/>
        <dbReference type="ChEBI" id="CHEBI:57392"/>
        <dbReference type="ChEBI" id="CHEBI:57692"/>
        <dbReference type="ChEBI" id="CHEBI:58307"/>
    </reaction>
    <physiologicalReaction direction="left-to-right" evidence="1">
        <dbReference type="Rhea" id="RHEA:31288"/>
    </physiologicalReaction>
</comment>
<comment type="cofactor">
    <cofactor evidence="1">
        <name>FAD</name>
        <dbReference type="ChEBI" id="CHEBI:57692"/>
    </cofactor>
</comment>
<comment type="pathway">
    <text evidence="1">Amino-acid degradation; L-valine degradation.</text>
</comment>
<comment type="subunit">
    <text evidence="1">Homotetramer, formed by a dimer of dimers.</text>
</comment>
<comment type="subcellular location">
    <subcellularLocation>
        <location evidence="1">Mitochondrion</location>
    </subcellularLocation>
</comment>
<comment type="similarity">
    <text evidence="3">Belongs to the acyl-CoA dehydrogenase family.</text>
</comment>
<comment type="sequence caution" evidence="3">
    <conflict type="erroneous initiation">
        <sequence resource="EMBL-CDS" id="BAC26664"/>
    </conflict>
</comment>
<sequence length="413" mass="45020">MAMLRSGYRRFGCLRAALKSLAQTHHRSITFCIDPSLGLNEEQKGFQKVAFDFAAREMAPNMAEWDQKELFPVDVMRKAAQLGFGGVYVRTDVGGSGLSRLDTSVIFEALATGCTSTTAYISIHNMCAWMIDSFGNEEQRHKFCPPLCTMEKFASYCLTEPGSGSDAASLLTSAKQQGDHYILNGSKAFISGGGESDIYVVMCRTGGSGAKGISCIVVEKGTPGLSFGKKEKKVGWNSQPTRAVIFEDCAVPVANRIGTEGQGFLIAMKGLNGGRINVASCSLGAAHASVILTQEHLKVRKQFGAPLARSQYLQFQLADMATKLVASRLMIRTAAVALQEEREDAVALCSMAKLFATEECFAICNQALQMHGGYGYLKDYAVQQYMRDSRVHQILEGSNEVMRMLISRNLLQD</sequence>